<evidence type="ECO:0000250" key="1"/>
<evidence type="ECO:0000255" key="2">
    <source>
        <dbReference type="PROSITE-ProRule" id="PRU00449"/>
    </source>
</evidence>
<evidence type="ECO:0000255" key="3">
    <source>
        <dbReference type="PROSITE-ProRule" id="PRU00451"/>
    </source>
</evidence>
<evidence type="ECO:0000256" key="4">
    <source>
        <dbReference type="SAM" id="MobiDB-lite"/>
    </source>
</evidence>
<evidence type="ECO:0000269" key="5">
    <source>
    </source>
</evidence>
<evidence type="ECO:0000312" key="6">
    <source>
        <dbReference type="EMBL" id="EAZ38825.1"/>
    </source>
</evidence>
<keyword id="KW-0479">Metal-binding</keyword>
<keyword id="KW-1185">Reference proteome</keyword>
<keyword id="KW-0346">Stress response</keyword>
<keyword id="KW-0862">Zinc</keyword>
<keyword id="KW-0863">Zinc-finger</keyword>
<gene>
    <name type="primary">SAP9</name>
    <name type="synonym">ZFP33</name>
    <name type="ordered locus">Os07g0168800</name>
    <name type="ordered locus">LOC_Os07g07350</name>
    <name evidence="6" type="ORF">OsJ_23237</name>
    <name type="ORF">OSJNBa0050F10.11</name>
</gene>
<name>SAP9_ORYSJ</name>
<proteinExistence type="evidence at transcript level"/>
<dbReference type="EMBL" id="AY282740">
    <property type="protein sequence ID" value="AAP37480.1"/>
    <property type="molecule type" value="mRNA"/>
</dbReference>
<dbReference type="EMBL" id="AP005840">
    <property type="protein sequence ID" value="BAD31780.1"/>
    <property type="molecule type" value="Genomic_DNA"/>
</dbReference>
<dbReference type="EMBL" id="AP008213">
    <property type="protein sequence ID" value="BAF20899.1"/>
    <property type="molecule type" value="Genomic_DNA"/>
</dbReference>
<dbReference type="EMBL" id="AP014963">
    <property type="protein sequence ID" value="BAT00224.1"/>
    <property type="molecule type" value="Genomic_DNA"/>
</dbReference>
<dbReference type="EMBL" id="CM000144">
    <property type="protein sequence ID" value="EAZ38825.1"/>
    <property type="molecule type" value="Genomic_DNA"/>
</dbReference>
<dbReference type="EMBL" id="AK121813">
    <property type="protein sequence ID" value="BAH00672.1"/>
    <property type="molecule type" value="mRNA"/>
</dbReference>
<dbReference type="RefSeq" id="XP_015647897.1">
    <property type="nucleotide sequence ID" value="XM_015792411.1"/>
</dbReference>
<dbReference type="SMR" id="Q7Y1W9"/>
<dbReference type="FunCoup" id="Q7Y1W9">
    <property type="interactions" value="720"/>
</dbReference>
<dbReference type="STRING" id="39947.Q7Y1W9"/>
<dbReference type="PaxDb" id="39947-Q7Y1W9"/>
<dbReference type="EnsemblPlants" id="Os07t0168800-01">
    <property type="protein sequence ID" value="Os07t0168800-01"/>
    <property type="gene ID" value="Os07g0168800"/>
</dbReference>
<dbReference type="Gramene" id="Os07t0168800-01">
    <property type="protein sequence ID" value="Os07t0168800-01"/>
    <property type="gene ID" value="Os07g0168800"/>
</dbReference>
<dbReference type="KEGG" id="dosa:Os07g0168800"/>
<dbReference type="eggNOG" id="KOG3173">
    <property type="taxonomic scope" value="Eukaryota"/>
</dbReference>
<dbReference type="HOGENOM" id="CLU_057016_5_3_1"/>
<dbReference type="InParanoid" id="Q7Y1W9"/>
<dbReference type="OMA" id="NPEVRCP"/>
<dbReference type="OrthoDB" id="428577at2759"/>
<dbReference type="Proteomes" id="UP000000763">
    <property type="component" value="Chromosome 7"/>
</dbReference>
<dbReference type="Proteomes" id="UP000007752">
    <property type="component" value="Chromosome 7"/>
</dbReference>
<dbReference type="Proteomes" id="UP000059680">
    <property type="component" value="Chromosome 7"/>
</dbReference>
<dbReference type="GO" id="GO:0003677">
    <property type="term" value="F:DNA binding"/>
    <property type="evidence" value="ECO:0007669"/>
    <property type="project" value="InterPro"/>
</dbReference>
<dbReference type="GO" id="GO:0008270">
    <property type="term" value="F:zinc ion binding"/>
    <property type="evidence" value="ECO:0007669"/>
    <property type="project" value="UniProtKB-KW"/>
</dbReference>
<dbReference type="FunFam" id="4.10.1110.10:FF:000001">
    <property type="entry name" value="Zinc finger AN1-type containing 6"/>
    <property type="match status" value="1"/>
</dbReference>
<dbReference type="Gene3D" id="1.20.5.4770">
    <property type="match status" value="1"/>
</dbReference>
<dbReference type="Gene3D" id="4.10.1110.10">
    <property type="entry name" value="AN1-like Zinc finger"/>
    <property type="match status" value="1"/>
</dbReference>
<dbReference type="InterPro" id="IPR035896">
    <property type="entry name" value="AN1-like_Znf"/>
</dbReference>
<dbReference type="InterPro" id="IPR050652">
    <property type="entry name" value="AN1_A20_ZnFinger"/>
</dbReference>
<dbReference type="InterPro" id="IPR002653">
    <property type="entry name" value="Znf_A20"/>
</dbReference>
<dbReference type="InterPro" id="IPR000058">
    <property type="entry name" value="Znf_AN1"/>
</dbReference>
<dbReference type="PANTHER" id="PTHR10634:SF149">
    <property type="entry name" value="AN1-TYPE DOMAIN-CONTAINING PROTEIN-RELATED"/>
    <property type="match status" value="1"/>
</dbReference>
<dbReference type="PANTHER" id="PTHR10634">
    <property type="entry name" value="AN1-TYPE ZINC FINGER PROTEIN"/>
    <property type="match status" value="1"/>
</dbReference>
<dbReference type="Pfam" id="PF01754">
    <property type="entry name" value="zf-A20"/>
    <property type="match status" value="1"/>
</dbReference>
<dbReference type="Pfam" id="PF01428">
    <property type="entry name" value="zf-AN1"/>
    <property type="match status" value="1"/>
</dbReference>
<dbReference type="SMART" id="SM00259">
    <property type="entry name" value="ZnF_A20"/>
    <property type="match status" value="1"/>
</dbReference>
<dbReference type="SMART" id="SM00154">
    <property type="entry name" value="ZnF_AN1"/>
    <property type="match status" value="1"/>
</dbReference>
<dbReference type="SUPFAM" id="SSF118310">
    <property type="entry name" value="AN1-like Zinc finger"/>
    <property type="match status" value="1"/>
</dbReference>
<dbReference type="SUPFAM" id="SSF57716">
    <property type="entry name" value="Glucocorticoid receptor-like (DNA-binding domain)"/>
    <property type="match status" value="1"/>
</dbReference>
<dbReference type="PROSITE" id="PS51036">
    <property type="entry name" value="ZF_A20"/>
    <property type="match status" value="1"/>
</dbReference>
<dbReference type="PROSITE" id="PS51039">
    <property type="entry name" value="ZF_AN1"/>
    <property type="match status" value="1"/>
</dbReference>
<organism>
    <name type="scientific">Oryza sativa subsp. japonica</name>
    <name type="common">Rice</name>
    <dbReference type="NCBI Taxonomy" id="39947"/>
    <lineage>
        <taxon>Eukaryota</taxon>
        <taxon>Viridiplantae</taxon>
        <taxon>Streptophyta</taxon>
        <taxon>Embryophyta</taxon>
        <taxon>Tracheophyta</taxon>
        <taxon>Spermatophyta</taxon>
        <taxon>Magnoliopsida</taxon>
        <taxon>Liliopsida</taxon>
        <taxon>Poales</taxon>
        <taxon>Poaceae</taxon>
        <taxon>BOP clade</taxon>
        <taxon>Oryzoideae</taxon>
        <taxon>Oryzeae</taxon>
        <taxon>Oryzinae</taxon>
        <taxon>Oryza</taxon>
        <taxon>Oryza sativa</taxon>
    </lineage>
</organism>
<sequence length="161" mass="17680">MAQESWKNESEETVHTPEAPILCVNNCGFFGSSMTNNMCSKCYRDFVKVTTMAAPVVEKKAFTPASSSKTPLEPAKPDEVPAAAVEDKQAAQEPPKPPSNRCLSCRKKVGLTGFQCRCGGTFCSTHRYTEAHDCTFDYKKAGRDQIAKQNPVVIAEKINKI</sequence>
<reference key="1">
    <citation type="submission" date="2003-04" db="EMBL/GenBank/DDBJ databases">
        <title>Molecular cloning of a zinc finger protein cDNA, OsZFP33, from rice.</title>
        <authorList>
            <person name="Huang J."/>
            <person name="Zhang H.-S."/>
        </authorList>
    </citation>
    <scope>NUCLEOTIDE SEQUENCE [MRNA]</scope>
    <source>
        <strain>cv. Jiu Caiqing</strain>
        <tissue>Root</tissue>
    </source>
</reference>
<reference key="2">
    <citation type="journal article" date="2005" name="Nature">
        <title>The map-based sequence of the rice genome.</title>
        <authorList>
            <consortium name="International rice genome sequencing project (IRGSP)"/>
        </authorList>
    </citation>
    <scope>NUCLEOTIDE SEQUENCE [LARGE SCALE GENOMIC DNA]</scope>
    <source>
        <strain>cv. Nipponbare</strain>
    </source>
</reference>
<reference key="3">
    <citation type="journal article" date="2008" name="Nucleic Acids Res.">
        <title>The rice annotation project database (RAP-DB): 2008 update.</title>
        <authorList>
            <consortium name="The rice annotation project (RAP)"/>
        </authorList>
    </citation>
    <scope>GENOME REANNOTATION</scope>
    <source>
        <strain>cv. Nipponbare</strain>
    </source>
</reference>
<reference key="4">
    <citation type="journal article" date="2013" name="Rice">
        <title>Improvement of the Oryza sativa Nipponbare reference genome using next generation sequence and optical map data.</title>
        <authorList>
            <person name="Kawahara Y."/>
            <person name="de la Bastide M."/>
            <person name="Hamilton J.P."/>
            <person name="Kanamori H."/>
            <person name="McCombie W.R."/>
            <person name="Ouyang S."/>
            <person name="Schwartz D.C."/>
            <person name="Tanaka T."/>
            <person name="Wu J."/>
            <person name="Zhou S."/>
            <person name="Childs K.L."/>
            <person name="Davidson R.M."/>
            <person name="Lin H."/>
            <person name="Quesada-Ocampo L."/>
            <person name="Vaillancourt B."/>
            <person name="Sakai H."/>
            <person name="Lee S.S."/>
            <person name="Kim J."/>
            <person name="Numa H."/>
            <person name="Itoh T."/>
            <person name="Buell C.R."/>
            <person name="Matsumoto T."/>
        </authorList>
    </citation>
    <scope>GENOME REANNOTATION</scope>
    <source>
        <strain>cv. Nipponbare</strain>
    </source>
</reference>
<reference key="5">
    <citation type="journal article" date="2005" name="PLoS Biol.">
        <title>The genomes of Oryza sativa: a history of duplications.</title>
        <authorList>
            <person name="Yu J."/>
            <person name="Wang J."/>
            <person name="Lin W."/>
            <person name="Li S."/>
            <person name="Li H."/>
            <person name="Zhou J."/>
            <person name="Ni P."/>
            <person name="Dong W."/>
            <person name="Hu S."/>
            <person name="Zeng C."/>
            <person name="Zhang J."/>
            <person name="Zhang Y."/>
            <person name="Li R."/>
            <person name="Xu Z."/>
            <person name="Li S."/>
            <person name="Li X."/>
            <person name="Zheng H."/>
            <person name="Cong L."/>
            <person name="Lin L."/>
            <person name="Yin J."/>
            <person name="Geng J."/>
            <person name="Li G."/>
            <person name="Shi J."/>
            <person name="Liu J."/>
            <person name="Lv H."/>
            <person name="Li J."/>
            <person name="Wang J."/>
            <person name="Deng Y."/>
            <person name="Ran L."/>
            <person name="Shi X."/>
            <person name="Wang X."/>
            <person name="Wu Q."/>
            <person name="Li C."/>
            <person name="Ren X."/>
            <person name="Wang J."/>
            <person name="Wang X."/>
            <person name="Li D."/>
            <person name="Liu D."/>
            <person name="Zhang X."/>
            <person name="Ji Z."/>
            <person name="Zhao W."/>
            <person name="Sun Y."/>
            <person name="Zhang Z."/>
            <person name="Bao J."/>
            <person name="Han Y."/>
            <person name="Dong L."/>
            <person name="Ji J."/>
            <person name="Chen P."/>
            <person name="Wu S."/>
            <person name="Liu J."/>
            <person name="Xiao Y."/>
            <person name="Bu D."/>
            <person name="Tan J."/>
            <person name="Yang L."/>
            <person name="Ye C."/>
            <person name="Zhang J."/>
            <person name="Xu J."/>
            <person name="Zhou Y."/>
            <person name="Yu Y."/>
            <person name="Zhang B."/>
            <person name="Zhuang S."/>
            <person name="Wei H."/>
            <person name="Liu B."/>
            <person name="Lei M."/>
            <person name="Yu H."/>
            <person name="Li Y."/>
            <person name="Xu H."/>
            <person name="Wei S."/>
            <person name="He X."/>
            <person name="Fang L."/>
            <person name="Zhang Z."/>
            <person name="Zhang Y."/>
            <person name="Huang X."/>
            <person name="Su Z."/>
            <person name="Tong W."/>
            <person name="Li J."/>
            <person name="Tong Z."/>
            <person name="Li S."/>
            <person name="Ye J."/>
            <person name="Wang L."/>
            <person name="Fang L."/>
            <person name="Lei T."/>
            <person name="Chen C.-S."/>
            <person name="Chen H.-C."/>
            <person name="Xu Z."/>
            <person name="Li H."/>
            <person name="Huang H."/>
            <person name="Zhang F."/>
            <person name="Xu H."/>
            <person name="Li N."/>
            <person name="Zhao C."/>
            <person name="Li S."/>
            <person name="Dong L."/>
            <person name="Huang Y."/>
            <person name="Li L."/>
            <person name="Xi Y."/>
            <person name="Qi Q."/>
            <person name="Li W."/>
            <person name="Zhang B."/>
            <person name="Hu W."/>
            <person name="Zhang Y."/>
            <person name="Tian X."/>
            <person name="Jiao Y."/>
            <person name="Liang X."/>
            <person name="Jin J."/>
            <person name="Gao L."/>
            <person name="Zheng W."/>
            <person name="Hao B."/>
            <person name="Liu S.-M."/>
            <person name="Wang W."/>
            <person name="Yuan L."/>
            <person name="Cao M."/>
            <person name="McDermott J."/>
            <person name="Samudrala R."/>
            <person name="Wang J."/>
            <person name="Wong G.K.-S."/>
            <person name="Yang H."/>
        </authorList>
    </citation>
    <scope>NUCLEOTIDE SEQUENCE [LARGE SCALE GENOMIC DNA]</scope>
    <source>
        <strain>cv. Nipponbare</strain>
    </source>
</reference>
<reference key="6">
    <citation type="journal article" date="2003" name="Science">
        <title>Collection, mapping, and annotation of over 28,000 cDNA clones from japonica rice.</title>
        <authorList>
            <consortium name="The rice full-length cDNA consortium"/>
        </authorList>
    </citation>
    <scope>NUCLEOTIDE SEQUENCE [LARGE SCALE MRNA]</scope>
    <source>
        <strain>cv. Nipponbare</strain>
    </source>
</reference>
<reference key="7">
    <citation type="journal article" date="2006" name="Mol. Genet. Genomics">
        <title>Genome-wide analysis of the stress associated protein (SAP) gene family containing A20/AN1 zinc-finger(s) in rice and their phylogenetic relationship with Arabidopsis.</title>
        <authorList>
            <person name="Vij S."/>
            <person name="Tyagi A.K."/>
        </authorList>
    </citation>
    <scope>GENE FAMILY</scope>
    <scope>INDUCTION</scope>
</reference>
<accession>Q7Y1W9</accession>
<accession>A3BGY6</accession>
<protein>
    <recommendedName>
        <fullName>Zinc finger A20 and AN1 domain-containing stress-associated protein 9</fullName>
        <shortName>OsSAP9</shortName>
    </recommendedName>
</protein>
<comment type="function">
    <text evidence="1">May be involved in environmental stress response.</text>
</comment>
<comment type="induction">
    <text evidence="5">By cold, dehydration and salt stress.</text>
</comment>
<feature type="chain" id="PRO_0000269872" description="Zinc finger A20 and AN1 domain-containing stress-associated protein 9">
    <location>
        <begin position="1"/>
        <end position="161"/>
    </location>
</feature>
<feature type="zinc finger region" description="A20-type" evidence="3">
    <location>
        <begin position="17"/>
        <end position="51"/>
    </location>
</feature>
<feature type="zinc finger region" description="AN1-type" evidence="2">
    <location>
        <begin position="96"/>
        <end position="142"/>
    </location>
</feature>
<feature type="region of interest" description="Disordered" evidence="4">
    <location>
        <begin position="62"/>
        <end position="99"/>
    </location>
</feature>
<feature type="compositionally biased region" description="Basic and acidic residues" evidence="4">
    <location>
        <begin position="75"/>
        <end position="90"/>
    </location>
</feature>
<feature type="binding site" evidence="3">
    <location>
        <position position="23"/>
    </location>
    <ligand>
        <name>Zn(2+)</name>
        <dbReference type="ChEBI" id="CHEBI:29105"/>
        <label>1</label>
    </ligand>
</feature>
<feature type="binding site" evidence="3">
    <location>
        <position position="27"/>
    </location>
    <ligand>
        <name>Zn(2+)</name>
        <dbReference type="ChEBI" id="CHEBI:29105"/>
        <label>1</label>
    </ligand>
</feature>
<feature type="binding site" evidence="3">
    <location>
        <position position="39"/>
    </location>
    <ligand>
        <name>Zn(2+)</name>
        <dbReference type="ChEBI" id="CHEBI:29105"/>
        <label>1</label>
    </ligand>
</feature>
<feature type="binding site" evidence="3">
    <location>
        <position position="42"/>
    </location>
    <ligand>
        <name>Zn(2+)</name>
        <dbReference type="ChEBI" id="CHEBI:29105"/>
        <label>1</label>
    </ligand>
</feature>
<feature type="binding site" evidence="2">
    <location>
        <position position="102"/>
    </location>
    <ligand>
        <name>Zn(2+)</name>
        <dbReference type="ChEBI" id="CHEBI:29105"/>
        <label>2</label>
    </ligand>
</feature>
<feature type="binding site" evidence="2">
    <location>
        <position position="105"/>
    </location>
    <ligand>
        <name>Zn(2+)</name>
        <dbReference type="ChEBI" id="CHEBI:29105"/>
        <label>2</label>
    </ligand>
</feature>
<feature type="binding site" evidence="2">
    <location>
        <position position="116"/>
    </location>
    <ligand>
        <name>Zn(2+)</name>
        <dbReference type="ChEBI" id="CHEBI:29105"/>
        <label>3</label>
    </ligand>
</feature>
<feature type="binding site" evidence="2">
    <location>
        <position position="118"/>
    </location>
    <ligand>
        <name>Zn(2+)</name>
        <dbReference type="ChEBI" id="CHEBI:29105"/>
        <label>3</label>
    </ligand>
</feature>
<feature type="binding site" evidence="2">
    <location>
        <position position="123"/>
    </location>
    <ligand>
        <name>Zn(2+)</name>
        <dbReference type="ChEBI" id="CHEBI:29105"/>
        <label>2</label>
    </ligand>
</feature>
<feature type="binding site" evidence="2">
    <location>
        <position position="126"/>
    </location>
    <ligand>
        <name>Zn(2+)</name>
        <dbReference type="ChEBI" id="CHEBI:29105"/>
        <label>2</label>
    </ligand>
</feature>
<feature type="binding site" evidence="2">
    <location>
        <position position="132"/>
    </location>
    <ligand>
        <name>Zn(2+)</name>
        <dbReference type="ChEBI" id="CHEBI:29105"/>
        <label>3</label>
    </ligand>
</feature>
<feature type="binding site" evidence="2">
    <location>
        <position position="134"/>
    </location>
    <ligand>
        <name>Zn(2+)</name>
        <dbReference type="ChEBI" id="CHEBI:29105"/>
        <label>3</label>
    </ligand>
</feature>